<organism>
    <name type="scientific">Methanocaldococcus jannaschii (strain ATCC 43067 / DSM 2661 / JAL-1 / JCM 10045 / NBRC 100440)</name>
    <name type="common">Methanococcus jannaschii</name>
    <dbReference type="NCBI Taxonomy" id="243232"/>
    <lineage>
        <taxon>Archaea</taxon>
        <taxon>Methanobacteriati</taxon>
        <taxon>Methanobacteriota</taxon>
        <taxon>Methanomada group</taxon>
        <taxon>Methanococci</taxon>
        <taxon>Methanococcales</taxon>
        <taxon>Methanocaldococcaceae</taxon>
        <taxon>Methanocaldococcus</taxon>
    </lineage>
</organism>
<sequence>MMVRIFDTTLRDGEQTPGVSLTPNDKLEIAKKLDELGVDVIEAGSAITSKGEREGIKLITKEGLNAEICSFVRALPVDIDAALECDVDSVHLVVPTSPIHMKYKLRKTEDEVLETALKAVEYAKEHGLIVELSAEDATRSDVNFLIKLFNEGEKVGADRVCVCDTVGVLTPQKSQELFKKITENVNLPVSVHCHNDFGMATANTCSAVLGGAVQCHVTVNGIGERAGNASLEEVVAALKILYGYDTKIKMEKLYEVSRIVSRLMKLPVPPNKAIVGDNAFAHEAGIHVDGLIKNTETYEPIKPEMVGNRRRIILGKHSGRKALKYKLDLMGINVSDEQLNKIYERVKEFGDLGKYISDADLLAIVREVTGKLVEEKIKLDELTVVSGNKITPIASVKLHYKGEDITLIETAYGVGPVDAAINAVRKAISGVADIKLVEYRVEAIGGGTDALIEVVVKLRKGTEIVEVRKSDADIIRASVDAVMEGINMLLN</sequence>
<evidence type="ECO:0000255" key="1">
    <source>
        <dbReference type="PROSITE-ProRule" id="PRU01151"/>
    </source>
</evidence>
<evidence type="ECO:0000269" key="2">
    <source>
    </source>
</evidence>
<evidence type="ECO:0000305" key="3"/>
<accession>Q58787</accession>
<gene>
    <name type="primary">cimA</name>
    <name type="ordered locus">MJ1392</name>
</gene>
<name>CIMA_METJA</name>
<reference key="1">
    <citation type="journal article" date="1996" name="Science">
        <title>Complete genome sequence of the methanogenic archaeon, Methanococcus jannaschii.</title>
        <authorList>
            <person name="Bult C.J."/>
            <person name="White O."/>
            <person name="Olsen G.J."/>
            <person name="Zhou L."/>
            <person name="Fleischmann R.D."/>
            <person name="Sutton G.G."/>
            <person name="Blake J.A."/>
            <person name="FitzGerald L.M."/>
            <person name="Clayton R.A."/>
            <person name="Gocayne J.D."/>
            <person name="Kerlavage A.R."/>
            <person name="Dougherty B.A."/>
            <person name="Tomb J.-F."/>
            <person name="Adams M.D."/>
            <person name="Reich C.I."/>
            <person name="Overbeek R."/>
            <person name="Kirkness E.F."/>
            <person name="Weinstock K.G."/>
            <person name="Merrick J.M."/>
            <person name="Glodek A."/>
            <person name="Scott J.L."/>
            <person name="Geoghagen N.S.M."/>
            <person name="Weidman J.F."/>
            <person name="Fuhrmann J.L."/>
            <person name="Nguyen D."/>
            <person name="Utterback T.R."/>
            <person name="Kelley J.M."/>
            <person name="Peterson J.D."/>
            <person name="Sadow P.W."/>
            <person name="Hanna M.C."/>
            <person name="Cotton M.D."/>
            <person name="Roberts K.M."/>
            <person name="Hurst M.A."/>
            <person name="Kaine B.P."/>
            <person name="Borodovsky M."/>
            <person name="Klenk H.-P."/>
            <person name="Fraser C.M."/>
            <person name="Smith H.O."/>
            <person name="Woese C.R."/>
            <person name="Venter J.C."/>
        </authorList>
    </citation>
    <scope>NUCLEOTIDE SEQUENCE [LARGE SCALE GENOMIC DNA]</scope>
    <source>
        <strain>ATCC 43067 / DSM 2661 / JAL-1 / JCM 10045 / NBRC 100440</strain>
    </source>
</reference>
<reference key="2">
    <citation type="journal article" date="1999" name="J. Bacteriol.">
        <title>(R)-citramalate synthase in methanogenic archaea.</title>
        <authorList>
            <person name="Howell D.M."/>
            <person name="Xu H."/>
            <person name="White R.H."/>
        </authorList>
    </citation>
    <scope>PROTEIN SEQUENCE OF 1-10</scope>
    <scope>FUNCTION</scope>
    <scope>CATALYTIC ACTIVITY</scope>
    <scope>PATHWAY</scope>
    <scope>SUBUNIT</scope>
</reference>
<comment type="function">
    <text evidence="2">Catalyzes the condensation of pyruvate and acetyl-coenzyme A to form (R)-citramalate.</text>
</comment>
<comment type="catalytic activity">
    <reaction evidence="2">
        <text>pyruvate + acetyl-CoA + H2O = (3R)-citramalate + CoA + H(+)</text>
        <dbReference type="Rhea" id="RHEA:19045"/>
        <dbReference type="ChEBI" id="CHEBI:15361"/>
        <dbReference type="ChEBI" id="CHEBI:15377"/>
        <dbReference type="ChEBI" id="CHEBI:15378"/>
        <dbReference type="ChEBI" id="CHEBI:30934"/>
        <dbReference type="ChEBI" id="CHEBI:57287"/>
        <dbReference type="ChEBI" id="CHEBI:57288"/>
        <dbReference type="EC" id="2.3.3.21"/>
    </reaction>
</comment>
<comment type="pathway">
    <text evidence="2">Amino-acid biosynthesis; L-isoleucine biosynthesis; 2-oxobutanoate from pyruvate: step 1/3.</text>
</comment>
<comment type="subunit">
    <text evidence="2">Homodimer.</text>
</comment>
<comment type="similarity">
    <text evidence="3">Belongs to the alpha-IPM synthase/homocitrate synthase family.</text>
</comment>
<dbReference type="EC" id="2.3.3.21"/>
<dbReference type="EMBL" id="L77117">
    <property type="protein sequence ID" value="AAB99402.1"/>
    <property type="molecule type" value="Genomic_DNA"/>
</dbReference>
<dbReference type="PIR" id="G64473">
    <property type="entry name" value="G64473"/>
</dbReference>
<dbReference type="RefSeq" id="WP_010870909.1">
    <property type="nucleotide sequence ID" value="NC_000909.1"/>
</dbReference>
<dbReference type="SMR" id="Q58787"/>
<dbReference type="FunCoup" id="Q58787">
    <property type="interactions" value="234"/>
</dbReference>
<dbReference type="STRING" id="243232.MJ_1392"/>
<dbReference type="PaxDb" id="243232-MJ_1392"/>
<dbReference type="EnsemblBacteria" id="AAB99402">
    <property type="protein sequence ID" value="AAB99402"/>
    <property type="gene ID" value="MJ_1392"/>
</dbReference>
<dbReference type="GeneID" id="1452295"/>
<dbReference type="KEGG" id="mja:MJ_1392"/>
<dbReference type="eggNOG" id="arCOG02092">
    <property type="taxonomic scope" value="Archaea"/>
</dbReference>
<dbReference type="HOGENOM" id="CLU_022158_0_1_2"/>
<dbReference type="InParanoid" id="Q58787"/>
<dbReference type="OrthoDB" id="6555at2157"/>
<dbReference type="PhylomeDB" id="Q58787"/>
<dbReference type="BioCyc" id="MetaCyc:MONOMER-11899"/>
<dbReference type="BRENDA" id="2.3.1.182">
    <property type="organism ID" value="3260"/>
</dbReference>
<dbReference type="UniPathway" id="UPA00047">
    <property type="reaction ID" value="UER00066"/>
</dbReference>
<dbReference type="Proteomes" id="UP000000805">
    <property type="component" value="Chromosome"/>
</dbReference>
<dbReference type="GO" id="GO:0043714">
    <property type="term" value="F:(R)-citramalate synthase activity"/>
    <property type="evidence" value="ECO:0007669"/>
    <property type="project" value="InterPro"/>
</dbReference>
<dbReference type="GO" id="GO:0003852">
    <property type="term" value="F:2-isopropylmalate synthase activity"/>
    <property type="evidence" value="ECO:0007669"/>
    <property type="project" value="InterPro"/>
</dbReference>
<dbReference type="GO" id="GO:0009097">
    <property type="term" value="P:isoleucine biosynthetic process"/>
    <property type="evidence" value="ECO:0007669"/>
    <property type="project" value="UniProtKB-UniRule"/>
</dbReference>
<dbReference type="GO" id="GO:0009098">
    <property type="term" value="P:L-leucine biosynthetic process"/>
    <property type="evidence" value="ECO:0007669"/>
    <property type="project" value="InterPro"/>
</dbReference>
<dbReference type="CDD" id="cd07940">
    <property type="entry name" value="DRE_TIM_IPMS"/>
    <property type="match status" value="1"/>
</dbReference>
<dbReference type="FunFam" id="1.10.238.260:FF:000001">
    <property type="entry name" value="2-isopropylmalate synthase"/>
    <property type="match status" value="1"/>
</dbReference>
<dbReference type="FunFam" id="3.20.20.70:FF:000010">
    <property type="entry name" value="2-isopropylmalate synthase"/>
    <property type="match status" value="1"/>
</dbReference>
<dbReference type="Gene3D" id="1.10.238.260">
    <property type="match status" value="1"/>
</dbReference>
<dbReference type="Gene3D" id="3.30.160.270">
    <property type="match status" value="1"/>
</dbReference>
<dbReference type="Gene3D" id="3.20.20.70">
    <property type="entry name" value="Aldolase class I"/>
    <property type="match status" value="1"/>
</dbReference>
<dbReference type="HAMAP" id="MF_01028">
    <property type="entry name" value="CimA"/>
    <property type="match status" value="1"/>
</dbReference>
<dbReference type="InterPro" id="IPR013709">
    <property type="entry name" value="2-isopropylmalate_synth_dimer"/>
</dbReference>
<dbReference type="InterPro" id="IPR002034">
    <property type="entry name" value="AIPM/Hcit_synth_CS"/>
</dbReference>
<dbReference type="InterPro" id="IPR013785">
    <property type="entry name" value="Aldolase_TIM"/>
</dbReference>
<dbReference type="InterPro" id="IPR024890">
    <property type="entry name" value="Citramalate_synthase_CimA"/>
</dbReference>
<dbReference type="InterPro" id="IPR011830">
    <property type="entry name" value="LEU1_arch"/>
</dbReference>
<dbReference type="InterPro" id="IPR054691">
    <property type="entry name" value="LeuA/HCS_post-cat"/>
</dbReference>
<dbReference type="InterPro" id="IPR036230">
    <property type="entry name" value="LeuA_allosteric_dom_sf"/>
</dbReference>
<dbReference type="InterPro" id="IPR000891">
    <property type="entry name" value="PYR_CT"/>
</dbReference>
<dbReference type="NCBIfam" id="TIGR02090">
    <property type="entry name" value="LEU1_arch"/>
    <property type="match status" value="1"/>
</dbReference>
<dbReference type="NCBIfam" id="NF002085">
    <property type="entry name" value="PRK00915.1-2"/>
    <property type="match status" value="1"/>
</dbReference>
<dbReference type="NCBIfam" id="NF002086">
    <property type="entry name" value="PRK00915.1-3"/>
    <property type="match status" value="1"/>
</dbReference>
<dbReference type="PANTHER" id="PTHR42880:SF2">
    <property type="entry name" value="(R)-CITRAMALATE SYNTHASE CIMA"/>
    <property type="match status" value="1"/>
</dbReference>
<dbReference type="PANTHER" id="PTHR42880">
    <property type="entry name" value="HOMOCITRATE SYNTHASE"/>
    <property type="match status" value="1"/>
</dbReference>
<dbReference type="Pfam" id="PF22617">
    <property type="entry name" value="HCS_D2"/>
    <property type="match status" value="1"/>
</dbReference>
<dbReference type="Pfam" id="PF00682">
    <property type="entry name" value="HMGL-like"/>
    <property type="match status" value="1"/>
</dbReference>
<dbReference type="Pfam" id="PF08502">
    <property type="entry name" value="LeuA_dimer"/>
    <property type="match status" value="1"/>
</dbReference>
<dbReference type="SMART" id="SM00917">
    <property type="entry name" value="LeuA_dimer"/>
    <property type="match status" value="1"/>
</dbReference>
<dbReference type="SUPFAM" id="SSF110921">
    <property type="entry name" value="2-isopropylmalate synthase LeuA, allosteric (dimerisation) domain"/>
    <property type="match status" value="1"/>
</dbReference>
<dbReference type="SUPFAM" id="SSF51569">
    <property type="entry name" value="Aldolase"/>
    <property type="match status" value="1"/>
</dbReference>
<dbReference type="PROSITE" id="PS00815">
    <property type="entry name" value="AIPM_HOMOCIT_SYNTH_1"/>
    <property type="match status" value="1"/>
</dbReference>
<dbReference type="PROSITE" id="PS00816">
    <property type="entry name" value="AIPM_HOMOCIT_SYNTH_2"/>
    <property type="match status" value="1"/>
</dbReference>
<dbReference type="PROSITE" id="PS50991">
    <property type="entry name" value="PYR_CT"/>
    <property type="match status" value="1"/>
</dbReference>
<protein>
    <recommendedName>
        <fullName>(R)-citramalate synthase CimA</fullName>
        <ecNumber>2.3.3.21</ecNumber>
    </recommendedName>
</protein>
<proteinExistence type="evidence at protein level"/>
<feature type="chain" id="PRO_0000140450" description="(R)-citramalate synthase CimA">
    <location>
        <begin position="1"/>
        <end position="491"/>
    </location>
</feature>
<feature type="domain" description="Pyruvate carboxyltransferase" evidence="1">
    <location>
        <begin position="3"/>
        <end position="254"/>
    </location>
</feature>
<feature type="sequence conflict" description="In Ref. 2; AA sequence." evidence="3" ref="2">
    <original>M</original>
    <variation>L</variation>
    <location>
        <position position="2"/>
    </location>
</feature>
<keyword id="KW-0028">Amino-acid biosynthesis</keyword>
<keyword id="KW-0100">Branched-chain amino acid biosynthesis</keyword>
<keyword id="KW-0903">Direct protein sequencing</keyword>
<keyword id="KW-0412">Isoleucine biosynthesis</keyword>
<keyword id="KW-1185">Reference proteome</keyword>
<keyword id="KW-0808">Transferase</keyword>